<reference key="1">
    <citation type="journal article" date="1991" name="J. Bacteriol.">
        <title>Halobacterium halobium strains lysogenic for phage phi H contain a protein resembling coliphage repressors.</title>
        <authorList>
            <person name="Ken R."/>
            <person name="Hackett N.R."/>
        </authorList>
    </citation>
    <scope>NUCLEOTIDE SEQUENCE [GENOMIC DNA]</scope>
</reference>
<evidence type="ECO:0000256" key="1">
    <source>
        <dbReference type="SAM" id="MobiDB-lite"/>
    </source>
</evidence>
<proteinExistence type="predicted"/>
<name>Y12K_BPPHH</name>
<dbReference type="EMBL" id="X52504">
    <property type="protein sequence ID" value="CAA36745.1"/>
    <property type="molecule type" value="Genomic_DNA"/>
</dbReference>
<dbReference type="PIR" id="S11640">
    <property type="entry name" value="S11640"/>
</dbReference>
<dbReference type="RefSeq" id="YP_009981861.1">
    <property type="nucleotide sequence ID" value="NC_052650.1"/>
</dbReference>
<dbReference type="GeneID" id="62571614"/>
<accession>P23788</accession>
<protein>
    <recommendedName>
        <fullName>Uncharacterized 12.3 kDa protein in repressor 5'region</fullName>
    </recommendedName>
</protein>
<sequence length="113" mass="12380">MARLNRHPQSNIAYAVRSLRSKGQLITNSAPTQNASTDALAVNIDHRAILTVPSYRSSVRVFQRSPCLHRAEGLLSPYCNRGSERTNQGNRGSAPSKILLPRTIADPFRGGPE</sequence>
<organism>
    <name type="scientific">Halobacterium phage phiH</name>
    <name type="common">Bacteriophage phi-H</name>
    <dbReference type="NCBI Taxonomy" id="169684"/>
    <lineage>
        <taxon>Viruses</taxon>
        <taxon>Duplodnaviria</taxon>
        <taxon>Heunggongvirae</taxon>
        <taxon>Uroviricota</taxon>
        <taxon>Caudoviricetes</taxon>
        <taxon>Vertoviridae</taxon>
        <taxon>Myohalovirus</taxon>
        <taxon>Myohalovirus phiH</taxon>
    </lineage>
</organism>
<feature type="chain" id="PRO_0000066066" description="Uncharacterized 12.3 kDa protein in repressor 5'region">
    <location>
        <begin position="1"/>
        <end position="113"/>
    </location>
</feature>
<feature type="region of interest" description="Disordered" evidence="1">
    <location>
        <begin position="78"/>
        <end position="113"/>
    </location>
</feature>
<organismHost>
    <name type="scientific">Halobacterium salinarum</name>
    <name type="common">Halobacterium halobium</name>
    <dbReference type="NCBI Taxonomy" id="2242"/>
</organismHost>